<dbReference type="EC" id="4.2.1.11"/>
<dbReference type="EMBL" id="AF072587">
    <property type="protein sequence ID" value="AAD41644.1"/>
    <property type="molecule type" value="mRNA"/>
</dbReference>
<dbReference type="SMR" id="Q9W7L2"/>
<dbReference type="UniPathway" id="UPA00109">
    <property type="reaction ID" value="UER00187"/>
</dbReference>
<dbReference type="GO" id="GO:0000015">
    <property type="term" value="C:phosphopyruvate hydratase complex"/>
    <property type="evidence" value="ECO:0007669"/>
    <property type="project" value="InterPro"/>
</dbReference>
<dbReference type="GO" id="GO:0000287">
    <property type="term" value="F:magnesium ion binding"/>
    <property type="evidence" value="ECO:0007669"/>
    <property type="project" value="InterPro"/>
</dbReference>
<dbReference type="GO" id="GO:0004634">
    <property type="term" value="F:phosphopyruvate hydratase activity"/>
    <property type="evidence" value="ECO:0007669"/>
    <property type="project" value="UniProtKB-EC"/>
</dbReference>
<dbReference type="GO" id="GO:0006096">
    <property type="term" value="P:glycolytic process"/>
    <property type="evidence" value="ECO:0007669"/>
    <property type="project" value="UniProtKB-UniPathway"/>
</dbReference>
<dbReference type="CDD" id="cd03313">
    <property type="entry name" value="enolase"/>
    <property type="match status" value="1"/>
</dbReference>
<dbReference type="FunFam" id="3.30.390.10:FF:000001">
    <property type="entry name" value="Enolase"/>
    <property type="match status" value="1"/>
</dbReference>
<dbReference type="FunFam" id="3.20.20.120:FF:000002">
    <property type="entry name" value="Enolase 1"/>
    <property type="match status" value="1"/>
</dbReference>
<dbReference type="Gene3D" id="3.20.20.120">
    <property type="entry name" value="Enolase-like C-terminal domain"/>
    <property type="match status" value="1"/>
</dbReference>
<dbReference type="Gene3D" id="3.30.390.10">
    <property type="entry name" value="Enolase-like, N-terminal domain"/>
    <property type="match status" value="1"/>
</dbReference>
<dbReference type="HAMAP" id="MF_00318">
    <property type="entry name" value="Enolase"/>
    <property type="match status" value="1"/>
</dbReference>
<dbReference type="InterPro" id="IPR000941">
    <property type="entry name" value="Enolase"/>
</dbReference>
<dbReference type="InterPro" id="IPR036849">
    <property type="entry name" value="Enolase-like_C_sf"/>
</dbReference>
<dbReference type="InterPro" id="IPR029017">
    <property type="entry name" value="Enolase-like_N"/>
</dbReference>
<dbReference type="InterPro" id="IPR020810">
    <property type="entry name" value="Enolase_C"/>
</dbReference>
<dbReference type="InterPro" id="IPR020809">
    <property type="entry name" value="Enolase_CS"/>
</dbReference>
<dbReference type="InterPro" id="IPR020811">
    <property type="entry name" value="Enolase_N"/>
</dbReference>
<dbReference type="NCBIfam" id="TIGR01060">
    <property type="entry name" value="eno"/>
    <property type="match status" value="1"/>
</dbReference>
<dbReference type="PANTHER" id="PTHR11902:SF12">
    <property type="entry name" value="ALPHA-ENOLASE"/>
    <property type="match status" value="1"/>
</dbReference>
<dbReference type="PANTHER" id="PTHR11902">
    <property type="entry name" value="ENOLASE"/>
    <property type="match status" value="1"/>
</dbReference>
<dbReference type="Pfam" id="PF00113">
    <property type="entry name" value="Enolase_C"/>
    <property type="match status" value="1"/>
</dbReference>
<dbReference type="Pfam" id="PF03952">
    <property type="entry name" value="Enolase_N"/>
    <property type="match status" value="1"/>
</dbReference>
<dbReference type="PIRSF" id="PIRSF001400">
    <property type="entry name" value="Enolase"/>
    <property type="match status" value="1"/>
</dbReference>
<dbReference type="PRINTS" id="PR00148">
    <property type="entry name" value="ENOLASE"/>
</dbReference>
<dbReference type="SFLD" id="SFLDS00001">
    <property type="entry name" value="Enolase"/>
    <property type="match status" value="1"/>
</dbReference>
<dbReference type="SFLD" id="SFLDF00002">
    <property type="entry name" value="enolase"/>
    <property type="match status" value="1"/>
</dbReference>
<dbReference type="SMART" id="SM01192">
    <property type="entry name" value="Enolase_C"/>
    <property type="match status" value="1"/>
</dbReference>
<dbReference type="SMART" id="SM01193">
    <property type="entry name" value="Enolase_N"/>
    <property type="match status" value="1"/>
</dbReference>
<dbReference type="SUPFAM" id="SSF51604">
    <property type="entry name" value="Enolase C-terminal domain-like"/>
    <property type="match status" value="1"/>
</dbReference>
<dbReference type="SUPFAM" id="SSF54826">
    <property type="entry name" value="Enolase N-terminal domain-like"/>
    <property type="match status" value="1"/>
</dbReference>
<dbReference type="PROSITE" id="PS00164">
    <property type="entry name" value="ENOLASE"/>
    <property type="match status" value="1"/>
</dbReference>
<proteinExistence type="evidence at transcript level"/>
<keyword id="KW-0963">Cytoplasm</keyword>
<keyword id="KW-0324">Glycolysis</keyword>
<keyword id="KW-0456">Lyase</keyword>
<keyword id="KW-0460">Magnesium</keyword>
<keyword id="KW-0479">Metal-binding</keyword>
<sequence>MSILKLHAREIFDSRGNPTVEVDLYTNKGLFRAAVPSGASTGIYEALELRDNDKTRFLGKGVSKAVEHVNKTIAPALVNKKVNVVEQEKIDKLMLEMDGTENKSKFGANAILGVSLAVCKAGAAEKGVPLYRHIADLAGNEDVILPVPAFNVINGGSHAGNKLAMQEFMILPVGAENFKEAMRIGAEVYQNLKNVIKEKYGKDATNVGDEGGFAPNILENKEALELLKSAISKAGYTDKIVIGMDVAASEFYRDGKYDLDFKSPDDPSRYITPDQLSDLYKGFIKNYPVVSIEDPFDQHDWAAWKKFTASAGIQVVGDDLTVTNPRRITKAVEEKSCNCLLLKVNQIGSVTESLQACKLAQTNGWGVMVSHRSGETEDTFIADLVVGLCTGQIKTGAPCRSERLAKYNQILRIEEELGSKGRFAGRNFRNPRVN</sequence>
<name>ENOA_SCEUN</name>
<evidence type="ECO:0000250" key="1"/>
<evidence type="ECO:0000305" key="2"/>
<organism>
    <name type="scientific">Sceloporus undulatus</name>
    <name type="common">Eastern fence lizard</name>
    <name type="synonym">Stellio undulatus</name>
    <dbReference type="NCBI Taxonomy" id="8520"/>
    <lineage>
        <taxon>Eukaryota</taxon>
        <taxon>Metazoa</taxon>
        <taxon>Chordata</taxon>
        <taxon>Craniata</taxon>
        <taxon>Vertebrata</taxon>
        <taxon>Euteleostomi</taxon>
        <taxon>Lepidosauria</taxon>
        <taxon>Squamata</taxon>
        <taxon>Bifurcata</taxon>
        <taxon>Unidentata</taxon>
        <taxon>Episquamata</taxon>
        <taxon>Toxicofera</taxon>
        <taxon>Iguania</taxon>
        <taxon>Phrynosomatidae</taxon>
        <taxon>Phrynosomatinae</taxon>
        <taxon>Sceloporus</taxon>
    </lineage>
</organism>
<accession>Q9W7L2</accession>
<feature type="initiator methionine" description="Removed" evidence="1">
    <location>
        <position position="1"/>
    </location>
</feature>
<feature type="chain" id="PRO_0000134104" description="Alpha-enolase">
    <location>
        <begin position="2"/>
        <end position="434"/>
    </location>
</feature>
<feature type="active site" description="Proton donor" evidence="1">
    <location>
        <position position="210"/>
    </location>
</feature>
<feature type="active site" description="Proton acceptor" evidence="1">
    <location>
        <position position="343"/>
    </location>
</feature>
<feature type="binding site" evidence="1">
    <location>
        <position position="40"/>
    </location>
    <ligand>
        <name>Mg(2+)</name>
        <dbReference type="ChEBI" id="CHEBI:18420"/>
        <label>1</label>
    </ligand>
</feature>
<feature type="binding site" evidence="1">
    <location>
        <position position="158"/>
    </location>
    <ligand>
        <name>substrate</name>
    </ligand>
</feature>
<feature type="binding site" evidence="1">
    <location>
        <position position="167"/>
    </location>
    <ligand>
        <name>substrate</name>
    </ligand>
</feature>
<feature type="binding site" evidence="1">
    <location>
        <position position="245"/>
    </location>
    <ligand>
        <name>Mg(2+)</name>
        <dbReference type="ChEBI" id="CHEBI:18420"/>
        <label>2</label>
    </ligand>
</feature>
<feature type="binding site" evidence="1">
    <location>
        <position position="293"/>
    </location>
    <ligand>
        <name>Mg(2+)</name>
        <dbReference type="ChEBI" id="CHEBI:18420"/>
        <label>2</label>
    </ligand>
</feature>
<feature type="binding site" evidence="1">
    <location>
        <position position="293"/>
    </location>
    <ligand>
        <name>substrate</name>
    </ligand>
</feature>
<feature type="binding site" evidence="1">
    <location>
        <position position="318"/>
    </location>
    <ligand>
        <name>Mg(2+)</name>
        <dbReference type="ChEBI" id="CHEBI:18420"/>
        <label>2</label>
    </ligand>
</feature>
<feature type="binding site" evidence="1">
    <location>
        <position position="318"/>
    </location>
    <ligand>
        <name>substrate</name>
    </ligand>
</feature>
<feature type="binding site" evidence="1">
    <location>
        <begin position="370"/>
        <end position="373"/>
    </location>
    <ligand>
        <name>substrate</name>
    </ligand>
</feature>
<feature type="binding site" evidence="1">
    <location>
        <position position="394"/>
    </location>
    <ligand>
        <name>substrate</name>
    </ligand>
</feature>
<protein>
    <recommendedName>
        <fullName>Alpha-enolase</fullName>
        <ecNumber>4.2.1.11</ecNumber>
    </recommendedName>
    <alternativeName>
        <fullName>2-phospho-D-glycerate hydro-lyase</fullName>
    </alternativeName>
    <alternativeName>
        <fullName>Phosphopyruvate hydratase</fullName>
    </alternativeName>
</protein>
<comment type="catalytic activity">
    <reaction>
        <text>(2R)-2-phosphoglycerate = phosphoenolpyruvate + H2O</text>
        <dbReference type="Rhea" id="RHEA:10164"/>
        <dbReference type="ChEBI" id="CHEBI:15377"/>
        <dbReference type="ChEBI" id="CHEBI:58289"/>
        <dbReference type="ChEBI" id="CHEBI:58702"/>
        <dbReference type="EC" id="4.2.1.11"/>
    </reaction>
</comment>
<comment type="cofactor">
    <cofactor evidence="1">
        <name>Mg(2+)</name>
        <dbReference type="ChEBI" id="CHEBI:18420"/>
    </cofactor>
    <text evidence="1">Binds two Mg(2+) per subunit. Required for catalysis and for stabilizing the dimer.</text>
</comment>
<comment type="pathway">
    <text>Carbohydrate degradation; glycolysis; pyruvate from D-glyceraldehyde 3-phosphate: step 4/5.</text>
</comment>
<comment type="subunit">
    <text evidence="1">Homodimer.</text>
</comment>
<comment type="subcellular location">
    <subcellularLocation>
        <location>Cytoplasm</location>
    </subcellularLocation>
</comment>
<comment type="similarity">
    <text evidence="2">Belongs to the enolase family.</text>
</comment>
<reference key="1">
    <citation type="journal article" date="1999" name="Mol. Phylogenet. Evol.">
        <title>Molecular evidence for a clade of turtles.</title>
        <authorList>
            <person name="Mannen H."/>
            <person name="Li S.S.-L."/>
        </authorList>
    </citation>
    <scope>NUCLEOTIDE SEQUENCE [MRNA]</scope>
    <source>
        <tissue>Muscle</tissue>
    </source>
</reference>